<gene>
    <name evidence="2" type="primary">ahpD</name>
    <name type="ordered locus">ckrop_1080</name>
</gene>
<dbReference type="EC" id="1.11.1.28" evidence="2"/>
<dbReference type="EMBL" id="CP001620">
    <property type="protein sequence ID" value="ACR17831.1"/>
    <property type="molecule type" value="Genomic_DNA"/>
</dbReference>
<dbReference type="RefSeq" id="WP_012731718.1">
    <property type="nucleotide sequence ID" value="NC_012704.1"/>
</dbReference>
<dbReference type="SMR" id="C4LJ26"/>
<dbReference type="STRING" id="645127.ckrop_1080"/>
<dbReference type="KEGG" id="ckp:ckrop_1080"/>
<dbReference type="eggNOG" id="COG0599">
    <property type="taxonomic scope" value="Bacteria"/>
</dbReference>
<dbReference type="HOGENOM" id="CLU_105328_0_0_11"/>
<dbReference type="OrthoDB" id="9801997at2"/>
<dbReference type="Proteomes" id="UP000001473">
    <property type="component" value="Chromosome"/>
</dbReference>
<dbReference type="GO" id="GO:0008785">
    <property type="term" value="F:alkyl hydroperoxide reductase activity"/>
    <property type="evidence" value="ECO:0007669"/>
    <property type="project" value="UniProtKB-UniRule"/>
</dbReference>
<dbReference type="GO" id="GO:0015036">
    <property type="term" value="F:disulfide oxidoreductase activity"/>
    <property type="evidence" value="ECO:0007669"/>
    <property type="project" value="TreeGrafter"/>
</dbReference>
<dbReference type="GO" id="GO:0032843">
    <property type="term" value="F:hydroperoxide reductase activity"/>
    <property type="evidence" value="ECO:0007669"/>
    <property type="project" value="InterPro"/>
</dbReference>
<dbReference type="GO" id="GO:0051920">
    <property type="term" value="F:peroxiredoxin activity"/>
    <property type="evidence" value="ECO:0007669"/>
    <property type="project" value="InterPro"/>
</dbReference>
<dbReference type="GO" id="GO:0045454">
    <property type="term" value="P:cell redox homeostasis"/>
    <property type="evidence" value="ECO:0007669"/>
    <property type="project" value="TreeGrafter"/>
</dbReference>
<dbReference type="GO" id="GO:0006979">
    <property type="term" value="P:response to oxidative stress"/>
    <property type="evidence" value="ECO:0007669"/>
    <property type="project" value="InterPro"/>
</dbReference>
<dbReference type="Gene3D" id="1.20.1290.10">
    <property type="entry name" value="AhpD-like"/>
    <property type="match status" value="1"/>
</dbReference>
<dbReference type="HAMAP" id="MF_01676">
    <property type="entry name" value="AhpD"/>
    <property type="match status" value="1"/>
</dbReference>
<dbReference type="InterPro" id="IPR004674">
    <property type="entry name" value="AhpD"/>
</dbReference>
<dbReference type="InterPro" id="IPR029032">
    <property type="entry name" value="AhpD-like"/>
</dbReference>
<dbReference type="InterPro" id="IPR004675">
    <property type="entry name" value="AhpD_core"/>
</dbReference>
<dbReference type="InterPro" id="IPR003779">
    <property type="entry name" value="CMD-like"/>
</dbReference>
<dbReference type="NCBIfam" id="TIGR00777">
    <property type="entry name" value="ahpD"/>
    <property type="match status" value="1"/>
</dbReference>
<dbReference type="NCBIfam" id="TIGR00778">
    <property type="entry name" value="ahpD_dom"/>
    <property type="match status" value="1"/>
</dbReference>
<dbReference type="PANTHER" id="PTHR33930">
    <property type="entry name" value="ALKYL HYDROPEROXIDE REDUCTASE AHPD"/>
    <property type="match status" value="1"/>
</dbReference>
<dbReference type="PANTHER" id="PTHR33930:SF7">
    <property type="entry name" value="ALKYL HYDROPEROXIDE REDUCTASE AHPD"/>
    <property type="match status" value="1"/>
</dbReference>
<dbReference type="Pfam" id="PF02627">
    <property type="entry name" value="CMD"/>
    <property type="match status" value="1"/>
</dbReference>
<dbReference type="SUPFAM" id="SSF69118">
    <property type="entry name" value="AhpD-like"/>
    <property type="match status" value="1"/>
</dbReference>
<comment type="function">
    <text evidence="2">Antioxidant protein with alkyl hydroperoxidase activity. Required for the reduction of the AhpC active site cysteine residues and for the regeneration of the AhpC enzyme activity.</text>
</comment>
<comment type="catalytic activity">
    <reaction evidence="2">
        <text>N(6)-[(R)-dihydrolipoyl]-L-lysyl-[lipoyl-carrier protein] + a hydroperoxide = N(6)-[(R)-lipoyl]-L-lysyl-[lipoyl-carrier protein] + an alcohol + H2O</text>
        <dbReference type="Rhea" id="RHEA:62636"/>
        <dbReference type="Rhea" id="RHEA-COMP:10502"/>
        <dbReference type="Rhea" id="RHEA-COMP:16355"/>
        <dbReference type="ChEBI" id="CHEBI:15377"/>
        <dbReference type="ChEBI" id="CHEBI:30879"/>
        <dbReference type="ChEBI" id="CHEBI:35924"/>
        <dbReference type="ChEBI" id="CHEBI:83099"/>
        <dbReference type="ChEBI" id="CHEBI:83100"/>
        <dbReference type="EC" id="1.11.1.28"/>
    </reaction>
</comment>
<comment type="subunit">
    <text evidence="2">Homotrimer.</text>
</comment>
<comment type="similarity">
    <text evidence="2">Belongs to the AhpD family.</text>
</comment>
<evidence type="ECO:0000250" key="1"/>
<evidence type="ECO:0000255" key="2">
    <source>
        <dbReference type="HAMAP-Rule" id="MF_01676"/>
    </source>
</evidence>
<keyword id="KW-0049">Antioxidant</keyword>
<keyword id="KW-1015">Disulfide bond</keyword>
<keyword id="KW-0560">Oxidoreductase</keyword>
<keyword id="KW-0575">Peroxidase</keyword>
<keyword id="KW-0676">Redox-active center</keyword>
<keyword id="KW-1185">Reference proteome</keyword>
<reference key="1">
    <citation type="journal article" date="2008" name="J. Biotechnol.">
        <title>Ultrafast pyrosequencing of Corynebacterium kroppenstedtii DSM44385 revealed insights into the physiology of a lipophilic corynebacterium that lacks mycolic acids.</title>
        <authorList>
            <person name="Tauch A."/>
            <person name="Schneider J."/>
            <person name="Szczepanowski R."/>
            <person name="Tilker A."/>
            <person name="Viehoever P."/>
            <person name="Gartemann K.-H."/>
            <person name="Arnold W."/>
            <person name="Blom J."/>
            <person name="Brinkrolf K."/>
            <person name="Brune I."/>
            <person name="Goetker S."/>
            <person name="Weisshaar B."/>
            <person name="Goesmann A."/>
            <person name="Droege M."/>
            <person name="Puehler A."/>
        </authorList>
    </citation>
    <scope>NUCLEOTIDE SEQUENCE [LARGE SCALE GENOMIC DNA]</scope>
    <source>
        <strain>DSM 44385 / JCM 11950 / CIP 105744 / CCUG 35717</strain>
    </source>
</reference>
<feature type="chain" id="PRO_1000215888" description="Alkyl hydroperoxide reductase AhpD">
    <location>
        <begin position="1"/>
        <end position="174"/>
    </location>
</feature>
<feature type="active site" description="Proton donor" evidence="2">
    <location>
        <position position="130"/>
    </location>
</feature>
<feature type="active site" description="Cysteine sulfenic acid (-SOH) intermediate" evidence="2">
    <location>
        <position position="133"/>
    </location>
</feature>
<feature type="disulfide bond" evidence="1">
    <location>
        <begin position="130"/>
        <end position="133"/>
    </location>
</feature>
<feature type="disulfide bond" description="Interchain (with AhpC); in linked form" evidence="2">
    <location>
        <position position="133"/>
    </location>
</feature>
<protein>
    <recommendedName>
        <fullName evidence="2">Alkyl hydroperoxide reductase AhpD</fullName>
        <ecNumber evidence="2">1.11.1.28</ecNumber>
    </recommendedName>
    <alternativeName>
        <fullName evidence="2">Alkylhydroperoxidase AhpD</fullName>
    </alternativeName>
</protein>
<sequence length="174" mass="18847">MALDNLKEGLPEYAKDLKLNLGTLSRSTELSEQQLWGTFLATAAATRNDTIISEIAEEASQHLSDEYVNAAYGAASIMAMNNVAYRAKSFLGSDYAQVRMGLRMNIINKSGIDKVDFELMALAVSTINGCHDCTKAHEKTVTSEGLTKEQVFEAVKIAATIQGVAQAIQIEAAR</sequence>
<proteinExistence type="inferred from homology"/>
<name>AHPD_CORK4</name>
<organism>
    <name type="scientific">Corynebacterium kroppenstedtii (strain DSM 44385 / JCM 11950 / CIP 105744 / CCUG 35717)</name>
    <dbReference type="NCBI Taxonomy" id="645127"/>
    <lineage>
        <taxon>Bacteria</taxon>
        <taxon>Bacillati</taxon>
        <taxon>Actinomycetota</taxon>
        <taxon>Actinomycetes</taxon>
        <taxon>Mycobacteriales</taxon>
        <taxon>Corynebacteriaceae</taxon>
        <taxon>Corynebacterium</taxon>
    </lineage>
</organism>
<accession>C4LJ26</accession>